<proteinExistence type="evidence at transcript level"/>
<keyword id="KW-0053">Apoptosis</keyword>
<keyword id="KW-0963">Cytoplasm</keyword>
<keyword id="KW-0206">Cytoskeleton</keyword>
<keyword id="KW-0539">Nucleus</keyword>
<feature type="chain" id="PRO_0000291661" description="Tumor necrosis factor receptor type 1-associated DEATH domain protein">
    <location>
        <begin position="1"/>
        <end position="292"/>
    </location>
</feature>
<feature type="domain" description="Death" evidence="4">
    <location>
        <begin position="199"/>
        <end position="289"/>
    </location>
</feature>
<feature type="short sequence motif" description="Nuclear export signal" evidence="1">
    <location>
        <begin position="148"/>
        <end position="164"/>
    </location>
</feature>
<feature type="short sequence motif" description="Nuclear localization signal" evidence="1">
    <location>
        <begin position="215"/>
        <end position="228"/>
    </location>
</feature>
<accession>Q1M161</accession>
<evidence type="ECO:0000250" key="1"/>
<evidence type="ECO:0000250" key="2">
    <source>
        <dbReference type="UniProtKB" id="Q15628"/>
    </source>
</evidence>
<evidence type="ECO:0000250" key="3">
    <source>
        <dbReference type="UniProtKB" id="Q3U0V2"/>
    </source>
</evidence>
<evidence type="ECO:0000255" key="4">
    <source>
        <dbReference type="PROSITE-ProRule" id="PRU00064"/>
    </source>
</evidence>
<evidence type="ECO:0000269" key="5">
    <source>
    </source>
</evidence>
<evidence type="ECO:0000312" key="6">
    <source>
        <dbReference type="EMBL" id="AAU81663.1"/>
    </source>
</evidence>
<comment type="function">
    <text evidence="2">Adapter molecule for tnfrsf1a that specifically associates with the cytoplasmic domain of activated tnfrsf1a mediating its interaction with fadd.</text>
</comment>
<comment type="subunit">
    <text evidence="2">Heterodimer with tnfrsf1a.</text>
</comment>
<comment type="subcellular location">
    <subcellularLocation>
        <location evidence="3">Nucleus</location>
    </subcellularLocation>
    <subcellularLocation>
        <location evidence="2">Cytoplasm</location>
    </subcellularLocation>
    <subcellularLocation>
        <location evidence="2">Cytoplasm</location>
        <location evidence="2">Cytoskeleton</location>
    </subcellularLocation>
    <text evidence="3">Shuttles between the cytoplasm and the nucleus.</text>
</comment>
<comment type="domain">
    <text evidence="2">Requires the intact death domain to associate with tnfrsf1a.</text>
</comment>
<protein>
    <recommendedName>
        <fullName>Tumor necrosis factor receptor type 1-associated DEATH domain protein</fullName>
        <shortName>TNFR1-associated DEATH domain protein</shortName>
    </recommendedName>
    <alternativeName>
        <fullName>TNFRSF1A-associated via death domain protein</fullName>
    </alternativeName>
</protein>
<reference evidence="6" key="1">
    <citation type="journal article" date="2004" name="Mol. Immunol.">
        <title>Analysis of genes isolated from lipopolysaccharide-stimulated rainbow trout (Oncorhynchus mykiss) macrophages.</title>
        <authorList>
            <person name="Goetz F.W."/>
            <person name="Iliev D.B."/>
            <person name="McCauley L.A."/>
            <person name="Liarte C.Q."/>
            <person name="Tort L.B."/>
            <person name="Planas J.V."/>
            <person name="Mackenzie S."/>
        </authorList>
    </citation>
    <scope>NUCLEOTIDE SEQUENCE [MRNA]</scope>
    <source>
        <tissue evidence="5">Macrophage</tissue>
    </source>
</reference>
<sequence>MVALSVEVGPWTGCAVLFLRSCPAVNLLSLYKDQQGKFSVFKVLKLTLTDSAGGLEGYEILKLHDADPLLGVEVKFVDVAACRRFLQSYGSGAVQQSLSQHTCRLLHIPQQELALETQLKAGTHTLDFCLDDLELCLQHIHQSQPERLRDDEIAELDQQLQSQALGHIPQPPTLTQEEPPVPSNCFLFQKRVFEDRMLAAGDLQRFSNGVGRDWRKVGRALGKNCRALKGPAIDNLAYEYEREGLYEQAYQLLSRFIQAEGRAARLGRLVRALEDSKLTSLAENILDIQPRD</sequence>
<organism>
    <name type="scientific">Oncorhynchus mykiss</name>
    <name type="common">Rainbow trout</name>
    <name type="synonym">Salmo gairdneri</name>
    <dbReference type="NCBI Taxonomy" id="8022"/>
    <lineage>
        <taxon>Eukaryota</taxon>
        <taxon>Metazoa</taxon>
        <taxon>Chordata</taxon>
        <taxon>Craniata</taxon>
        <taxon>Vertebrata</taxon>
        <taxon>Euteleostomi</taxon>
        <taxon>Actinopterygii</taxon>
        <taxon>Neopterygii</taxon>
        <taxon>Teleostei</taxon>
        <taxon>Protacanthopterygii</taxon>
        <taxon>Salmoniformes</taxon>
        <taxon>Salmonidae</taxon>
        <taxon>Salmoninae</taxon>
        <taxon>Oncorhynchus</taxon>
    </lineage>
</organism>
<dbReference type="EMBL" id="AY614596">
    <property type="protein sequence ID" value="AAU81663.1"/>
    <property type="molecule type" value="mRNA"/>
</dbReference>
<dbReference type="RefSeq" id="NP_001118111.1">
    <property type="nucleotide sequence ID" value="NM_001124639.2"/>
</dbReference>
<dbReference type="SMR" id="Q1M161"/>
<dbReference type="GeneID" id="100136668"/>
<dbReference type="KEGG" id="omy:100136668"/>
<dbReference type="CTD" id="8717"/>
<dbReference type="OrthoDB" id="9903238at2759"/>
<dbReference type="Proteomes" id="UP000694395">
    <property type="component" value="Unplaced"/>
</dbReference>
<dbReference type="GO" id="GO:0005737">
    <property type="term" value="C:cytoplasm"/>
    <property type="evidence" value="ECO:0007669"/>
    <property type="project" value="UniProtKB-SubCell"/>
</dbReference>
<dbReference type="GO" id="GO:0005856">
    <property type="term" value="C:cytoskeleton"/>
    <property type="evidence" value="ECO:0007669"/>
    <property type="project" value="UniProtKB-SubCell"/>
</dbReference>
<dbReference type="GO" id="GO:0005634">
    <property type="term" value="C:nucleus"/>
    <property type="evidence" value="ECO:0007669"/>
    <property type="project" value="UniProtKB-SubCell"/>
</dbReference>
<dbReference type="GO" id="GO:0002947">
    <property type="term" value="C:tumor necrosis factor receptor superfamily complex"/>
    <property type="evidence" value="ECO:0007669"/>
    <property type="project" value="TreeGrafter"/>
</dbReference>
<dbReference type="GO" id="GO:0005068">
    <property type="term" value="F:transmembrane receptor protein tyrosine kinase adaptor activity"/>
    <property type="evidence" value="ECO:0007669"/>
    <property type="project" value="TreeGrafter"/>
</dbReference>
<dbReference type="GO" id="GO:0097191">
    <property type="term" value="P:extrinsic apoptotic signaling pathway"/>
    <property type="evidence" value="ECO:0007669"/>
    <property type="project" value="TreeGrafter"/>
</dbReference>
<dbReference type="GO" id="GO:0043123">
    <property type="term" value="P:positive regulation of canonical NF-kappaB signal transduction"/>
    <property type="evidence" value="ECO:0007669"/>
    <property type="project" value="InterPro"/>
</dbReference>
<dbReference type="Gene3D" id="1.10.533.10">
    <property type="entry name" value="Death Domain, Fas"/>
    <property type="match status" value="1"/>
</dbReference>
<dbReference type="Gene3D" id="3.30.70.680">
    <property type="entry name" value="TRADD, N-terminal domain"/>
    <property type="match status" value="1"/>
</dbReference>
<dbReference type="InterPro" id="IPR011029">
    <property type="entry name" value="DEATH-like_dom_sf"/>
</dbReference>
<dbReference type="InterPro" id="IPR000488">
    <property type="entry name" value="Death_dom"/>
</dbReference>
<dbReference type="InterPro" id="IPR035712">
    <property type="entry name" value="TRADD"/>
</dbReference>
<dbReference type="InterPro" id="IPR009095">
    <property type="entry name" value="TRADD_N"/>
</dbReference>
<dbReference type="InterPro" id="IPR036729">
    <property type="entry name" value="TRADD_N_sf"/>
</dbReference>
<dbReference type="PANTHER" id="PTHR14913">
    <property type="entry name" value="TUMOR NECROSIS FACTOR RECEPTOR TYPE 1-ASSOCIATED DEATH DOMAIN PROTEIN"/>
    <property type="match status" value="1"/>
</dbReference>
<dbReference type="PANTHER" id="PTHR14913:SF0">
    <property type="entry name" value="TUMOR NECROSIS FACTOR RECEPTOR TYPE 1-ASSOCIATED DEATH DOMAIN PROTEIN"/>
    <property type="match status" value="1"/>
</dbReference>
<dbReference type="Pfam" id="PF00531">
    <property type="entry name" value="Death"/>
    <property type="match status" value="1"/>
</dbReference>
<dbReference type="Pfam" id="PF09034">
    <property type="entry name" value="TRADD_N"/>
    <property type="match status" value="1"/>
</dbReference>
<dbReference type="SMART" id="SM00005">
    <property type="entry name" value="DEATH"/>
    <property type="match status" value="1"/>
</dbReference>
<dbReference type="SUPFAM" id="SSF47986">
    <property type="entry name" value="DEATH domain"/>
    <property type="match status" value="1"/>
</dbReference>
<dbReference type="SUPFAM" id="SSF55044">
    <property type="entry name" value="TRADD, N-terminal domain"/>
    <property type="match status" value="1"/>
</dbReference>
<dbReference type="PROSITE" id="PS50017">
    <property type="entry name" value="DEATH_DOMAIN"/>
    <property type="match status" value="1"/>
</dbReference>
<gene>
    <name type="primary">tradd</name>
</gene>
<name>TRADD_ONCMY</name>